<dbReference type="EC" id="2.6.1.1" evidence="3"/>
<dbReference type="EC" id="2.6.1.7" evidence="3"/>
<dbReference type="EMBL" id="AB169685">
    <property type="protein sequence ID" value="BAE01766.1"/>
    <property type="molecule type" value="mRNA"/>
</dbReference>
<dbReference type="RefSeq" id="NP_001270119.1">
    <property type="nucleotide sequence ID" value="NM_001283190.1"/>
</dbReference>
<dbReference type="RefSeq" id="XP_045238841.1">
    <property type="nucleotide sequence ID" value="XM_045382906.2"/>
</dbReference>
<dbReference type="SMR" id="Q4R559"/>
<dbReference type="STRING" id="9541.ENSMFAP00000009330"/>
<dbReference type="GeneID" id="101867025"/>
<dbReference type="VEuPathDB" id="HostDB:ENSMFAG00000000866"/>
<dbReference type="eggNOG" id="KOG1411">
    <property type="taxonomic scope" value="Eukaryota"/>
</dbReference>
<dbReference type="Proteomes" id="UP000233100">
    <property type="component" value="Chromosome 20"/>
</dbReference>
<dbReference type="GO" id="GO:0005759">
    <property type="term" value="C:mitochondrial matrix"/>
    <property type="evidence" value="ECO:0007669"/>
    <property type="project" value="UniProtKB-SubCell"/>
</dbReference>
<dbReference type="GO" id="GO:0005739">
    <property type="term" value="C:mitochondrion"/>
    <property type="evidence" value="ECO:0000250"/>
    <property type="project" value="UniProtKB"/>
</dbReference>
<dbReference type="GO" id="GO:0005886">
    <property type="term" value="C:plasma membrane"/>
    <property type="evidence" value="ECO:0007669"/>
    <property type="project" value="UniProtKB-SubCell"/>
</dbReference>
<dbReference type="GO" id="GO:0016212">
    <property type="term" value="F:kynurenine-oxoglutarate transaminase activity"/>
    <property type="evidence" value="ECO:0007669"/>
    <property type="project" value="UniProtKB-EC"/>
</dbReference>
<dbReference type="GO" id="GO:0004069">
    <property type="term" value="F:L-aspartate:2-oxoglutarate aminotransferase activity"/>
    <property type="evidence" value="ECO:0000250"/>
    <property type="project" value="UniProtKB"/>
</dbReference>
<dbReference type="GO" id="GO:0030170">
    <property type="term" value="F:pyridoxal phosphate binding"/>
    <property type="evidence" value="ECO:0007669"/>
    <property type="project" value="InterPro"/>
</dbReference>
<dbReference type="GO" id="GO:0006103">
    <property type="term" value="P:2-oxoglutarate metabolic process"/>
    <property type="evidence" value="ECO:0000250"/>
    <property type="project" value="UniProtKB"/>
</dbReference>
<dbReference type="GO" id="GO:0006533">
    <property type="term" value="P:aspartate catabolic process"/>
    <property type="evidence" value="ECO:0007669"/>
    <property type="project" value="TreeGrafter"/>
</dbReference>
<dbReference type="GO" id="GO:0006531">
    <property type="term" value="P:aspartate metabolic process"/>
    <property type="evidence" value="ECO:0000250"/>
    <property type="project" value="UniProtKB"/>
</dbReference>
<dbReference type="GO" id="GO:0009058">
    <property type="term" value="P:biosynthetic process"/>
    <property type="evidence" value="ECO:0007669"/>
    <property type="project" value="InterPro"/>
</dbReference>
<dbReference type="GO" id="GO:0006536">
    <property type="term" value="P:glutamate metabolic process"/>
    <property type="evidence" value="ECO:0000250"/>
    <property type="project" value="UniProtKB"/>
</dbReference>
<dbReference type="GO" id="GO:0006869">
    <property type="term" value="P:lipid transport"/>
    <property type="evidence" value="ECO:0007669"/>
    <property type="project" value="UniProtKB-KW"/>
</dbReference>
<dbReference type="CDD" id="cd00609">
    <property type="entry name" value="AAT_like"/>
    <property type="match status" value="1"/>
</dbReference>
<dbReference type="FunFam" id="3.40.640.10:FF:000026">
    <property type="entry name" value="Aspartate aminotransferase"/>
    <property type="match status" value="1"/>
</dbReference>
<dbReference type="FunFam" id="3.90.1150.10:FF:000001">
    <property type="entry name" value="Aspartate aminotransferase"/>
    <property type="match status" value="1"/>
</dbReference>
<dbReference type="FunFam" id="3.90.1150.10:FF:000160">
    <property type="entry name" value="Similar to aspartate aminotransferase"/>
    <property type="match status" value="1"/>
</dbReference>
<dbReference type="Gene3D" id="3.90.1150.10">
    <property type="entry name" value="Aspartate Aminotransferase, domain 1"/>
    <property type="match status" value="1"/>
</dbReference>
<dbReference type="Gene3D" id="3.40.640.10">
    <property type="entry name" value="Type I PLP-dependent aspartate aminotransferase-like (Major domain)"/>
    <property type="match status" value="1"/>
</dbReference>
<dbReference type="InterPro" id="IPR004839">
    <property type="entry name" value="Aminotransferase_I/II_large"/>
</dbReference>
<dbReference type="InterPro" id="IPR000796">
    <property type="entry name" value="Asp_trans"/>
</dbReference>
<dbReference type="InterPro" id="IPR004838">
    <property type="entry name" value="NHTrfase_class1_PyrdxlP-BS"/>
</dbReference>
<dbReference type="InterPro" id="IPR015424">
    <property type="entry name" value="PyrdxlP-dep_Trfase"/>
</dbReference>
<dbReference type="InterPro" id="IPR015421">
    <property type="entry name" value="PyrdxlP-dep_Trfase_major"/>
</dbReference>
<dbReference type="InterPro" id="IPR015422">
    <property type="entry name" value="PyrdxlP-dep_Trfase_small"/>
</dbReference>
<dbReference type="NCBIfam" id="NF006719">
    <property type="entry name" value="PRK09257.1"/>
    <property type="match status" value="1"/>
</dbReference>
<dbReference type="PANTHER" id="PTHR11879">
    <property type="entry name" value="ASPARTATE AMINOTRANSFERASE"/>
    <property type="match status" value="1"/>
</dbReference>
<dbReference type="PANTHER" id="PTHR11879:SF22">
    <property type="entry name" value="ASPARTATE AMINOTRANSFERASE, MITOCHONDRIAL"/>
    <property type="match status" value="1"/>
</dbReference>
<dbReference type="Pfam" id="PF00155">
    <property type="entry name" value="Aminotran_1_2"/>
    <property type="match status" value="1"/>
</dbReference>
<dbReference type="PRINTS" id="PR00799">
    <property type="entry name" value="TRANSAMINASE"/>
</dbReference>
<dbReference type="SUPFAM" id="SSF53383">
    <property type="entry name" value="PLP-dependent transferases"/>
    <property type="match status" value="1"/>
</dbReference>
<dbReference type="PROSITE" id="PS00105">
    <property type="entry name" value="AA_TRANSFER_CLASS_1"/>
    <property type="match status" value="1"/>
</dbReference>
<accession>Q4R559</accession>
<feature type="transit peptide" description="Mitochondrion" evidence="1">
    <location>
        <begin position="1"/>
        <end position="29"/>
    </location>
</feature>
<feature type="chain" id="PRO_0000278664" description="Aspartate aminotransferase, mitochondrial">
    <location>
        <begin position="30"/>
        <end position="430"/>
    </location>
</feature>
<feature type="binding site" evidence="1">
    <location>
        <position position="65"/>
    </location>
    <ligand>
        <name>substrate</name>
    </ligand>
</feature>
<feature type="binding site" evidence="1">
    <location>
        <position position="162"/>
    </location>
    <ligand>
        <name>substrate</name>
    </ligand>
</feature>
<feature type="binding site" evidence="1">
    <location>
        <position position="215"/>
    </location>
    <ligand>
        <name>substrate</name>
    </ligand>
</feature>
<feature type="binding site" evidence="1">
    <location>
        <position position="407"/>
    </location>
    <ligand>
        <name>substrate</name>
    </ligand>
</feature>
<feature type="modified residue" description="Phosphothreonine" evidence="2">
    <location>
        <position position="48"/>
    </location>
</feature>
<feature type="modified residue" description="N6-acetyllysine" evidence="4">
    <location>
        <position position="59"/>
    </location>
</feature>
<feature type="modified residue" description="N6-acetyllysine; alternate" evidence="2">
    <location>
        <position position="73"/>
    </location>
</feature>
<feature type="modified residue" description="N6-succinyllysine; alternate" evidence="4">
    <location>
        <position position="73"/>
    </location>
</feature>
<feature type="modified residue" description="N6-acetyllysine" evidence="4">
    <location>
        <position position="82"/>
    </location>
</feature>
<feature type="modified residue" description="N6-acetyllysine; alternate" evidence="2">
    <location>
        <position position="90"/>
    </location>
</feature>
<feature type="modified residue" description="N6-succinyllysine; alternate" evidence="4">
    <location>
        <position position="90"/>
    </location>
</feature>
<feature type="modified residue" description="3'-nitrotyrosine; alternate" evidence="4">
    <location>
        <position position="96"/>
    </location>
</feature>
<feature type="modified residue" description="Phosphotyrosine; alternate" evidence="2">
    <location>
        <position position="96"/>
    </location>
</feature>
<feature type="modified residue" description="N6-acetyllysine; alternate" evidence="4">
    <location>
        <position position="107"/>
    </location>
</feature>
<feature type="modified residue" description="N6-succinyllysine; alternate" evidence="4">
    <location>
        <position position="107"/>
    </location>
</feature>
<feature type="modified residue" description="N6-acetyllysine; alternate" evidence="4">
    <location>
        <position position="122"/>
    </location>
</feature>
<feature type="modified residue" description="N6-succinyllysine; alternate" evidence="4">
    <location>
        <position position="122"/>
    </location>
</feature>
<feature type="modified residue" description="Phosphoserine" evidence="2">
    <location>
        <position position="143"/>
    </location>
</feature>
<feature type="modified residue" description="N6-acetyllysine; alternate" evidence="2">
    <location>
        <position position="159"/>
    </location>
</feature>
<feature type="modified residue" description="N6-succinyllysine; alternate" evidence="4">
    <location>
        <position position="159"/>
    </location>
</feature>
<feature type="modified residue" description="N6-acetyllysine; alternate" evidence="4">
    <location>
        <position position="185"/>
    </location>
</feature>
<feature type="modified residue" description="N6-succinyllysine; alternate" evidence="4">
    <location>
        <position position="185"/>
    </location>
</feature>
<feature type="modified residue" description="N6-succinyllysine" evidence="4">
    <location>
        <position position="227"/>
    </location>
</feature>
<feature type="modified residue" description="N6-acetyllysine" evidence="2">
    <location>
        <position position="234"/>
    </location>
</feature>
<feature type="modified residue" description="N6-(pyridoxal phosphate)lysine; alternate" evidence="1">
    <location>
        <position position="279"/>
    </location>
</feature>
<feature type="modified residue" description="N6-acetyllysine; alternate" evidence="4">
    <location>
        <position position="279"/>
    </location>
</feature>
<feature type="modified residue" description="N6-acetyllysine; alternate" evidence="2">
    <location>
        <position position="296"/>
    </location>
</feature>
<feature type="modified residue" description="N6-succinyllysine; alternate" evidence="4">
    <location>
        <position position="296"/>
    </location>
</feature>
<feature type="modified residue" description="N6-acetyllysine" evidence="4">
    <location>
        <position position="302"/>
    </location>
</feature>
<feature type="modified residue" description="N6-acetyllysine; alternate" evidence="4">
    <location>
        <position position="309"/>
    </location>
</feature>
<feature type="modified residue" description="N6-succinyllysine; alternate" evidence="5">
    <location>
        <position position="309"/>
    </location>
</feature>
<feature type="modified residue" description="Asymmetric dimethylarginine" evidence="4">
    <location>
        <position position="313"/>
    </location>
</feature>
<feature type="modified residue" description="Phosphothreonine" evidence="2">
    <location>
        <position position="333"/>
    </location>
</feature>
<feature type="modified residue" description="N6-acetyllysine; alternate" evidence="4">
    <location>
        <position position="338"/>
    </location>
</feature>
<feature type="modified residue" description="N6-succinyllysine; alternate" evidence="4">
    <location>
        <position position="338"/>
    </location>
</feature>
<feature type="modified residue" description="N6-acetyllysine" evidence="4">
    <location>
        <position position="345"/>
    </location>
</feature>
<feature type="modified residue" description="N6-acetyllysine; alternate" evidence="4">
    <location>
        <position position="363"/>
    </location>
</feature>
<feature type="modified residue" description="N6-succinyllysine; alternate" evidence="4">
    <location>
        <position position="363"/>
    </location>
</feature>
<feature type="modified residue" description="N6-acetyllysine" evidence="4">
    <location>
        <position position="364"/>
    </location>
</feature>
<feature type="modified residue" description="N6-acetyllysine" evidence="4">
    <location>
        <position position="387"/>
    </location>
</feature>
<feature type="modified residue" description="N6-acetyllysine; alternate" evidence="2">
    <location>
        <position position="396"/>
    </location>
</feature>
<feature type="modified residue" description="N6-succinyllysine; alternate" evidence="4">
    <location>
        <position position="396"/>
    </location>
</feature>
<feature type="modified residue" description="N6-acetyllysine; alternate" evidence="2">
    <location>
        <position position="404"/>
    </location>
</feature>
<feature type="modified residue" description="N6-succinyllysine; alternate" evidence="4">
    <location>
        <position position="404"/>
    </location>
</feature>
<comment type="function">
    <text evidence="2">Catalyzes the irreversible transamination of the L-tryptophan metabolite L-kynurenine to form kynurenic acid (KA). As a member of the malate-aspartate shuttle, it has a key role in the intracellular NAD(H) redox balance. Is important for metabolite exchange between mitochondria and cytosol, and for amino acid metabolism. Facilitates cellular uptake of long-chain free fatty acids.</text>
</comment>
<comment type="catalytic activity">
    <reaction evidence="3">
        <text>L-aspartate + 2-oxoglutarate = oxaloacetate + L-glutamate</text>
        <dbReference type="Rhea" id="RHEA:21824"/>
        <dbReference type="ChEBI" id="CHEBI:16452"/>
        <dbReference type="ChEBI" id="CHEBI:16810"/>
        <dbReference type="ChEBI" id="CHEBI:29985"/>
        <dbReference type="ChEBI" id="CHEBI:29991"/>
        <dbReference type="EC" id="2.6.1.1"/>
    </reaction>
</comment>
<comment type="catalytic activity">
    <reaction evidence="3">
        <text>L-kynurenine + 2-oxoglutarate = kynurenate + L-glutamate + H2O</text>
        <dbReference type="Rhea" id="RHEA:65560"/>
        <dbReference type="ChEBI" id="CHEBI:15377"/>
        <dbReference type="ChEBI" id="CHEBI:16810"/>
        <dbReference type="ChEBI" id="CHEBI:29985"/>
        <dbReference type="ChEBI" id="CHEBI:57959"/>
        <dbReference type="ChEBI" id="CHEBI:58454"/>
        <dbReference type="EC" id="2.6.1.7"/>
    </reaction>
</comment>
<comment type="cofactor">
    <cofactor evidence="1">
        <name>pyridoxal 5'-phosphate</name>
        <dbReference type="ChEBI" id="CHEBI:597326"/>
    </cofactor>
</comment>
<comment type="subunit">
    <text evidence="1">Homodimer.</text>
</comment>
<comment type="subcellular location">
    <subcellularLocation>
        <location evidence="1">Mitochondrion matrix</location>
    </subcellularLocation>
    <subcellularLocation>
        <location evidence="1">Cell membrane</location>
    </subcellularLocation>
</comment>
<comment type="miscellaneous">
    <text>In eukaryotes there are cytoplasmic, mitochondrial and chloroplastic isozymes.</text>
</comment>
<comment type="similarity">
    <text evidence="6">Belongs to the class-I pyridoxal-phosphate-dependent aminotransferase family.</text>
</comment>
<sequence length="430" mass="47409">MALLHSGRVLSGIAAAFHPGLAAAASARASSWWTHVEMGPPDPILGVTEAFKRDTNSKKMNLGVGAYRDDNGKPYVLPSVRKAEAQIAAKNLDKEYLPIGGLAEFCKASAELALGENSEVLKSGRFVTVQTISGTGALRIGASFLQRFFKFSRDVFLPKPSWGNHTPIFRDAGMQLQGYRYYDPKTCGFDFTGAVEDISKIPEQSVLLLHACAHNPTGVDPRPEQWKEIATVVKKRNLFAFFDMAYQGFASGDGDKDAWAVRHFIEQGINVCLCQSYAKNMGLYGERVGAFTMVCKDADEAKRVESQLKILIRPMYSNPPLNGARIAAAILNTPDLRKQWLQEVKGMADRIIGMRTQLVSNLKKEGSTHNWQHITDQIGMFCFTGLKPEQVERLTKEFSIYMTKDGRISVAGVTSGNVGYLAHAIHQVTK</sequence>
<evidence type="ECO:0000250" key="1"/>
<evidence type="ECO:0000250" key="2">
    <source>
        <dbReference type="UniProtKB" id="P00505"/>
    </source>
</evidence>
<evidence type="ECO:0000250" key="3">
    <source>
        <dbReference type="UniProtKB" id="P00507"/>
    </source>
</evidence>
<evidence type="ECO:0000250" key="4">
    <source>
        <dbReference type="UniProtKB" id="P05202"/>
    </source>
</evidence>
<evidence type="ECO:0000250" key="5">
    <source>
        <dbReference type="UniProtKB" id="P12344"/>
    </source>
</evidence>
<evidence type="ECO:0000305" key="6"/>
<reference key="1">
    <citation type="submission" date="2005-06" db="EMBL/GenBank/DDBJ databases">
        <title>DNA sequences of macaque genes expressed in brain or testis and its evolutionary implications.</title>
        <authorList>
            <consortium name="International consortium for macaque cDNA sequencing and analysis"/>
        </authorList>
    </citation>
    <scope>NUCLEOTIDE SEQUENCE [LARGE SCALE MRNA]</scope>
    <source>
        <tissue>Brain cortex</tissue>
    </source>
</reference>
<organism>
    <name type="scientific">Macaca fascicularis</name>
    <name type="common">Crab-eating macaque</name>
    <name type="synonym">Cynomolgus monkey</name>
    <dbReference type="NCBI Taxonomy" id="9541"/>
    <lineage>
        <taxon>Eukaryota</taxon>
        <taxon>Metazoa</taxon>
        <taxon>Chordata</taxon>
        <taxon>Craniata</taxon>
        <taxon>Vertebrata</taxon>
        <taxon>Euteleostomi</taxon>
        <taxon>Mammalia</taxon>
        <taxon>Eutheria</taxon>
        <taxon>Euarchontoglires</taxon>
        <taxon>Primates</taxon>
        <taxon>Haplorrhini</taxon>
        <taxon>Catarrhini</taxon>
        <taxon>Cercopithecidae</taxon>
        <taxon>Cercopithecinae</taxon>
        <taxon>Macaca</taxon>
    </lineage>
</organism>
<gene>
    <name type="primary">GOT2</name>
    <name type="ORF">QccE-17876</name>
</gene>
<proteinExistence type="evidence at transcript level"/>
<keyword id="KW-0007">Acetylation</keyword>
<keyword id="KW-0032">Aminotransferase</keyword>
<keyword id="KW-1003">Cell membrane</keyword>
<keyword id="KW-0445">Lipid transport</keyword>
<keyword id="KW-0472">Membrane</keyword>
<keyword id="KW-0488">Methylation</keyword>
<keyword id="KW-0496">Mitochondrion</keyword>
<keyword id="KW-0944">Nitration</keyword>
<keyword id="KW-0597">Phosphoprotein</keyword>
<keyword id="KW-0663">Pyridoxal phosphate</keyword>
<keyword id="KW-1185">Reference proteome</keyword>
<keyword id="KW-0808">Transferase</keyword>
<keyword id="KW-0809">Transit peptide</keyword>
<keyword id="KW-0813">Transport</keyword>
<protein>
    <recommendedName>
        <fullName>Aspartate aminotransferase, mitochondrial</fullName>
        <shortName>mAspAT</shortName>
        <ecNumber evidence="3">2.6.1.1</ecNumber>
        <ecNumber evidence="3">2.6.1.7</ecNumber>
    </recommendedName>
    <alternativeName>
        <fullName>Fatty acid-binding protein</fullName>
        <shortName>FABP-1</shortName>
    </alternativeName>
    <alternativeName>
        <fullName>Glutamate oxaloacetate transaminase 2</fullName>
    </alternativeName>
    <alternativeName>
        <fullName>Kynurenine aminotransferase 4</fullName>
    </alternativeName>
    <alternativeName>
        <fullName>Kynurenine aminotransferase IV</fullName>
    </alternativeName>
    <alternativeName>
        <fullName>Kynurenine--oxoglutarate transaminase 4</fullName>
    </alternativeName>
    <alternativeName>
        <fullName>Kynurenine--oxoglutarate transaminase IV</fullName>
    </alternativeName>
    <alternativeName>
        <fullName>Plasma membrane-associated fatty acid-binding protein</fullName>
        <shortName>FABPpm</shortName>
    </alternativeName>
    <alternativeName>
        <fullName>Transaminase A</fullName>
    </alternativeName>
</protein>
<name>AATM_MACFA</name>